<reference key="1">
    <citation type="journal article" date="2004" name="Nat. Biotechnol.">
        <title>Complete sequence and comparative genome analysis of the dairy bacterium Streptococcus thermophilus.</title>
        <authorList>
            <person name="Bolotin A."/>
            <person name="Quinquis B."/>
            <person name="Renault P."/>
            <person name="Sorokin A."/>
            <person name="Ehrlich S.D."/>
            <person name="Kulakauskas S."/>
            <person name="Lapidus A."/>
            <person name="Goltsman E."/>
            <person name="Mazur M."/>
            <person name="Pusch G.D."/>
            <person name="Fonstein M."/>
            <person name="Overbeek R."/>
            <person name="Kyprides N."/>
            <person name="Purnelle B."/>
            <person name="Prozzi D."/>
            <person name="Ngui K."/>
            <person name="Masuy D."/>
            <person name="Hancy F."/>
            <person name="Burteau S."/>
            <person name="Boutry M."/>
            <person name="Delcour J."/>
            <person name="Goffeau A."/>
            <person name="Hols P."/>
        </authorList>
    </citation>
    <scope>NUCLEOTIDE SEQUENCE [LARGE SCALE GENOMIC DNA]</scope>
    <source>
        <strain>CNRZ 1066</strain>
    </source>
</reference>
<evidence type="ECO:0000255" key="1">
    <source>
        <dbReference type="HAMAP-Rule" id="MF_00051"/>
    </source>
</evidence>
<evidence type="ECO:0007829" key="2">
    <source>
        <dbReference type="PDB" id="4WXF"/>
    </source>
</evidence>
<evidence type="ECO:0007829" key="3">
    <source>
        <dbReference type="PDB" id="4WXG"/>
    </source>
</evidence>
<evidence type="ECO:0007829" key="4">
    <source>
        <dbReference type="PDB" id="6TI3"/>
    </source>
</evidence>
<evidence type="ECO:0007829" key="5">
    <source>
        <dbReference type="PDB" id="6YRW"/>
    </source>
</evidence>
<keyword id="KW-0002">3D-structure</keyword>
<keyword id="KW-0028">Amino-acid biosynthesis</keyword>
<keyword id="KW-0963">Cytoplasm</keyword>
<keyword id="KW-0554">One-carbon metabolism</keyword>
<keyword id="KW-0663">Pyridoxal phosphate</keyword>
<keyword id="KW-0808">Transferase</keyword>
<proteinExistence type="evidence at protein level"/>
<name>GLYA_STRT1</name>
<accession>Q5M0B4</accession>
<sequence>MIFDKEDYKAFDPELWNAIDAEAERQQNNIELIASENVVSKAVMAAQGTLLTNKYAEGYPGKRYYGGTAVIDVVETLAIERAKKLFGAKFANVQPHSGSQANAAVYMSLIQPGDTVMGMDLSAGGHLTHGAPVSFSGKTYNFVSYNVDKESELLDYDAILAQAKEVRPKLIVAGASAYSRIIDFAKFREIADAVGAYLMVDMAHIAGLVASGHHPSPVPYAHVTTTTTHKTLRGPRGGLILTDDEDIAKKLNSAVFPGLQGGPLEHVIAAKAVALKEALDPAFKEYGENVIKNAAAMADVFNQHPDFRVISGGTNNHLFLVDVTKVVENGKVAQNVLEEVNITLNKNSIPYEQLSPFKTSGIRVGSPAITSRGMGEAESRQIAEWMVEALENHDKPEVLERIRGDVKVLTDAFPLY</sequence>
<feature type="chain" id="PRO_0000235033" description="Serine hydroxymethyltransferase">
    <location>
        <begin position="1"/>
        <end position="416"/>
    </location>
</feature>
<feature type="binding site" evidence="1">
    <location>
        <position position="121"/>
    </location>
    <ligand>
        <name>(6S)-5,6,7,8-tetrahydrofolate</name>
        <dbReference type="ChEBI" id="CHEBI:57453"/>
    </ligand>
</feature>
<feature type="binding site" evidence="1">
    <location>
        <begin position="125"/>
        <end position="127"/>
    </location>
    <ligand>
        <name>(6S)-5,6,7,8-tetrahydrofolate</name>
        <dbReference type="ChEBI" id="CHEBI:57453"/>
    </ligand>
</feature>
<feature type="binding site" evidence="1">
    <location>
        <begin position="355"/>
        <end position="357"/>
    </location>
    <ligand>
        <name>(6S)-5,6,7,8-tetrahydrofolate</name>
        <dbReference type="ChEBI" id="CHEBI:57453"/>
    </ligand>
</feature>
<feature type="site" description="Plays an important role in substrate specificity" evidence="1">
    <location>
        <position position="229"/>
    </location>
</feature>
<feature type="modified residue" description="N6-(pyridoxal phosphate)lysine" evidence="1">
    <location>
        <position position="230"/>
    </location>
</feature>
<feature type="turn" evidence="4">
    <location>
        <begin position="8"/>
        <end position="10"/>
    </location>
</feature>
<feature type="helix" evidence="4">
    <location>
        <begin position="13"/>
        <end position="27"/>
    </location>
</feature>
<feature type="strand" evidence="3">
    <location>
        <begin position="29"/>
        <end position="31"/>
    </location>
</feature>
<feature type="helix" evidence="4">
    <location>
        <begin position="41"/>
        <end position="47"/>
    </location>
</feature>
<feature type="helix" evidence="4">
    <location>
        <begin position="50"/>
        <end position="53"/>
    </location>
</feature>
<feature type="strand" evidence="4">
    <location>
        <begin position="62"/>
        <end position="67"/>
    </location>
</feature>
<feature type="helix" evidence="4">
    <location>
        <begin position="69"/>
        <end position="86"/>
    </location>
</feature>
<feature type="strand" evidence="4">
    <location>
        <begin position="89"/>
        <end position="92"/>
    </location>
</feature>
<feature type="helix" evidence="4">
    <location>
        <begin position="98"/>
        <end position="109"/>
    </location>
</feature>
<feature type="strand" evidence="4">
    <location>
        <begin position="115"/>
        <end position="119"/>
    </location>
</feature>
<feature type="turn" evidence="4">
    <location>
        <begin position="121"/>
        <end position="124"/>
    </location>
</feature>
<feature type="helix" evidence="4">
    <location>
        <begin position="127"/>
        <end position="129"/>
    </location>
</feature>
<feature type="helix" evidence="4">
    <location>
        <begin position="135"/>
        <end position="139"/>
    </location>
</feature>
<feature type="strand" evidence="4">
    <location>
        <begin position="140"/>
        <end position="145"/>
    </location>
</feature>
<feature type="turn" evidence="4">
    <location>
        <begin position="149"/>
        <end position="151"/>
    </location>
</feature>
<feature type="helix" evidence="4">
    <location>
        <begin position="156"/>
        <end position="166"/>
    </location>
</feature>
<feature type="strand" evidence="4">
    <location>
        <begin position="169"/>
        <end position="173"/>
    </location>
</feature>
<feature type="helix" evidence="4">
    <location>
        <begin position="184"/>
        <end position="193"/>
    </location>
</feature>
<feature type="strand" evidence="4">
    <location>
        <begin position="197"/>
        <end position="201"/>
    </location>
</feature>
<feature type="turn" evidence="4">
    <location>
        <begin position="203"/>
        <end position="205"/>
    </location>
</feature>
<feature type="helix" evidence="4">
    <location>
        <begin position="206"/>
        <end position="210"/>
    </location>
</feature>
<feature type="turn" evidence="4">
    <location>
        <begin position="218"/>
        <end position="220"/>
    </location>
</feature>
<feature type="strand" evidence="4">
    <location>
        <begin position="222"/>
        <end position="230"/>
    </location>
</feature>
<feature type="strand" evidence="4">
    <location>
        <begin position="238"/>
        <end position="243"/>
    </location>
</feature>
<feature type="helix" evidence="4">
    <location>
        <begin position="245"/>
        <end position="255"/>
    </location>
</feature>
<feature type="turn" evidence="4">
    <location>
        <begin position="256"/>
        <end position="259"/>
    </location>
</feature>
<feature type="helix" evidence="4">
    <location>
        <begin position="265"/>
        <end position="279"/>
    </location>
</feature>
<feature type="helix" evidence="4">
    <location>
        <begin position="281"/>
        <end position="303"/>
    </location>
</feature>
<feature type="strand" evidence="2">
    <location>
        <begin position="304"/>
        <end position="306"/>
    </location>
</feature>
<feature type="helix" evidence="4">
    <location>
        <begin position="310"/>
        <end position="312"/>
    </location>
</feature>
<feature type="strand" evidence="4">
    <location>
        <begin position="315"/>
        <end position="322"/>
    </location>
</feature>
<feature type="turn" evidence="4">
    <location>
        <begin position="324"/>
        <end position="326"/>
    </location>
</feature>
<feature type="strand" evidence="5">
    <location>
        <begin position="327"/>
        <end position="329"/>
    </location>
</feature>
<feature type="helix" evidence="4">
    <location>
        <begin position="330"/>
        <end position="338"/>
    </location>
</feature>
<feature type="turn" evidence="4">
    <location>
        <begin position="339"/>
        <end position="341"/>
    </location>
</feature>
<feature type="strand" evidence="3">
    <location>
        <begin position="345"/>
        <end position="347"/>
    </location>
</feature>
<feature type="turn" evidence="4">
    <location>
        <begin position="356"/>
        <end position="358"/>
    </location>
</feature>
<feature type="strand" evidence="4">
    <location>
        <begin position="360"/>
        <end position="365"/>
    </location>
</feature>
<feature type="helix" evidence="4">
    <location>
        <begin position="367"/>
        <end position="371"/>
    </location>
</feature>
<feature type="helix" evidence="4">
    <location>
        <begin position="376"/>
        <end position="391"/>
    </location>
</feature>
<feature type="turn" evidence="4">
    <location>
        <begin position="392"/>
        <end position="394"/>
    </location>
</feature>
<feature type="helix" evidence="4">
    <location>
        <begin position="396"/>
        <end position="412"/>
    </location>
</feature>
<gene>
    <name evidence="1" type="primary">glyA</name>
    <name type="ordered locus">str0755</name>
</gene>
<protein>
    <recommendedName>
        <fullName evidence="1">Serine hydroxymethyltransferase</fullName>
        <shortName evidence="1">SHMT</shortName>
        <shortName evidence="1">Serine methylase</shortName>
        <ecNumber evidence="1">2.1.2.1</ecNumber>
    </recommendedName>
</protein>
<organism>
    <name type="scientific">Streptococcus thermophilus (strain CNRZ 1066)</name>
    <dbReference type="NCBI Taxonomy" id="299768"/>
    <lineage>
        <taxon>Bacteria</taxon>
        <taxon>Bacillati</taxon>
        <taxon>Bacillota</taxon>
        <taxon>Bacilli</taxon>
        <taxon>Lactobacillales</taxon>
        <taxon>Streptococcaceae</taxon>
        <taxon>Streptococcus</taxon>
    </lineage>
</organism>
<comment type="function">
    <text evidence="1">Catalyzes the reversible interconversion of serine and glycine with tetrahydrofolate (THF) serving as the one-carbon carrier. This reaction serves as the major source of one-carbon groups required for the biosynthesis of purines, thymidylate, methionine, and other important biomolecules. Also exhibits THF-independent aldolase activity toward beta-hydroxyamino acids, producing glycine and aldehydes, via a retro-aldol mechanism.</text>
</comment>
<comment type="catalytic activity">
    <reaction evidence="1">
        <text>(6R)-5,10-methylene-5,6,7,8-tetrahydrofolate + glycine + H2O = (6S)-5,6,7,8-tetrahydrofolate + L-serine</text>
        <dbReference type="Rhea" id="RHEA:15481"/>
        <dbReference type="ChEBI" id="CHEBI:15377"/>
        <dbReference type="ChEBI" id="CHEBI:15636"/>
        <dbReference type="ChEBI" id="CHEBI:33384"/>
        <dbReference type="ChEBI" id="CHEBI:57305"/>
        <dbReference type="ChEBI" id="CHEBI:57453"/>
        <dbReference type="EC" id="2.1.2.1"/>
    </reaction>
</comment>
<comment type="cofactor">
    <cofactor evidence="1">
        <name>pyridoxal 5'-phosphate</name>
        <dbReference type="ChEBI" id="CHEBI:597326"/>
    </cofactor>
</comment>
<comment type="pathway">
    <text evidence="1">One-carbon metabolism; tetrahydrofolate interconversion.</text>
</comment>
<comment type="pathway">
    <text evidence="1">Amino-acid biosynthesis; glycine biosynthesis; glycine from L-serine: step 1/1.</text>
</comment>
<comment type="subunit">
    <text evidence="1">Homodimer.</text>
</comment>
<comment type="subcellular location">
    <subcellularLocation>
        <location evidence="1">Cytoplasm</location>
    </subcellularLocation>
</comment>
<comment type="similarity">
    <text evidence="1">Belongs to the SHMT family.</text>
</comment>
<dbReference type="EC" id="2.1.2.1" evidence="1"/>
<dbReference type="EMBL" id="CP000024">
    <property type="protein sequence ID" value="AAV62348.1"/>
    <property type="molecule type" value="Genomic_DNA"/>
</dbReference>
<dbReference type="RefSeq" id="WP_011227085.1">
    <property type="nucleotide sequence ID" value="NC_006449.1"/>
</dbReference>
<dbReference type="PDB" id="4WXB">
    <property type="method" value="X-ray"/>
    <property type="resolution" value="2.05 A"/>
    <property type="chains" value="A/B/C/D=1-416"/>
</dbReference>
<dbReference type="PDB" id="4WXF">
    <property type="method" value="X-ray"/>
    <property type="resolution" value="2.40 A"/>
    <property type="chains" value="A/C=1-416"/>
</dbReference>
<dbReference type="PDB" id="4WXG">
    <property type="method" value="X-ray"/>
    <property type="resolution" value="2.00 A"/>
    <property type="chains" value="A/C=1-416"/>
</dbReference>
<dbReference type="PDB" id="6TGH">
    <property type="method" value="X-ray"/>
    <property type="resolution" value="2.12 A"/>
    <property type="chains" value="A/B/C/D=2-416"/>
</dbReference>
<dbReference type="PDB" id="6TI1">
    <property type="method" value="X-ray"/>
    <property type="resolution" value="2.00 A"/>
    <property type="chains" value="A/C=1-416"/>
</dbReference>
<dbReference type="PDB" id="6TI3">
    <property type="method" value="X-ray"/>
    <property type="resolution" value="1.96 A"/>
    <property type="chains" value="A/B/C/D=1-416"/>
</dbReference>
<dbReference type="PDB" id="6YRW">
    <property type="method" value="X-ray"/>
    <property type="resolution" value="2.50 A"/>
    <property type="chains" value="A/B/C/D=1-416"/>
</dbReference>
<dbReference type="PDBsum" id="4WXB"/>
<dbReference type="PDBsum" id="4WXF"/>
<dbReference type="PDBsum" id="4WXG"/>
<dbReference type="PDBsum" id="6TGH"/>
<dbReference type="PDBsum" id="6TI1"/>
<dbReference type="PDBsum" id="6TI3"/>
<dbReference type="PDBsum" id="6YRW"/>
<dbReference type="SMR" id="Q5M0B4"/>
<dbReference type="KEGG" id="stc:str0755"/>
<dbReference type="HOGENOM" id="CLU_022477_2_1_9"/>
<dbReference type="BRENDA" id="2.1.2.1">
    <property type="organism ID" value="5956"/>
</dbReference>
<dbReference type="UniPathway" id="UPA00193"/>
<dbReference type="UniPathway" id="UPA00288">
    <property type="reaction ID" value="UER01023"/>
</dbReference>
<dbReference type="EvolutionaryTrace" id="Q5M0B4"/>
<dbReference type="GO" id="GO:0005829">
    <property type="term" value="C:cytosol"/>
    <property type="evidence" value="ECO:0007669"/>
    <property type="project" value="TreeGrafter"/>
</dbReference>
<dbReference type="GO" id="GO:0004372">
    <property type="term" value="F:glycine hydroxymethyltransferase activity"/>
    <property type="evidence" value="ECO:0007669"/>
    <property type="project" value="UniProtKB-UniRule"/>
</dbReference>
<dbReference type="GO" id="GO:0030170">
    <property type="term" value="F:pyridoxal phosphate binding"/>
    <property type="evidence" value="ECO:0007669"/>
    <property type="project" value="UniProtKB-UniRule"/>
</dbReference>
<dbReference type="GO" id="GO:0019264">
    <property type="term" value="P:glycine biosynthetic process from serine"/>
    <property type="evidence" value="ECO:0007669"/>
    <property type="project" value="UniProtKB-UniRule"/>
</dbReference>
<dbReference type="GO" id="GO:0035999">
    <property type="term" value="P:tetrahydrofolate interconversion"/>
    <property type="evidence" value="ECO:0007669"/>
    <property type="project" value="UniProtKB-UniRule"/>
</dbReference>
<dbReference type="CDD" id="cd00378">
    <property type="entry name" value="SHMT"/>
    <property type="match status" value="1"/>
</dbReference>
<dbReference type="FunFam" id="3.40.640.10:FF:000001">
    <property type="entry name" value="Serine hydroxymethyltransferase"/>
    <property type="match status" value="1"/>
</dbReference>
<dbReference type="FunFam" id="3.90.1150.10:FF:000072">
    <property type="entry name" value="Serine hydroxymethyltransferase"/>
    <property type="match status" value="1"/>
</dbReference>
<dbReference type="Gene3D" id="3.90.1150.10">
    <property type="entry name" value="Aspartate Aminotransferase, domain 1"/>
    <property type="match status" value="1"/>
</dbReference>
<dbReference type="Gene3D" id="3.40.640.10">
    <property type="entry name" value="Type I PLP-dependent aspartate aminotransferase-like (Major domain)"/>
    <property type="match status" value="1"/>
</dbReference>
<dbReference type="HAMAP" id="MF_00051">
    <property type="entry name" value="SHMT"/>
    <property type="match status" value="1"/>
</dbReference>
<dbReference type="InterPro" id="IPR015424">
    <property type="entry name" value="PyrdxlP-dep_Trfase"/>
</dbReference>
<dbReference type="InterPro" id="IPR015421">
    <property type="entry name" value="PyrdxlP-dep_Trfase_major"/>
</dbReference>
<dbReference type="InterPro" id="IPR015422">
    <property type="entry name" value="PyrdxlP-dep_Trfase_small"/>
</dbReference>
<dbReference type="InterPro" id="IPR001085">
    <property type="entry name" value="Ser_HO-MeTrfase"/>
</dbReference>
<dbReference type="InterPro" id="IPR049943">
    <property type="entry name" value="Ser_HO-MeTrfase-like"/>
</dbReference>
<dbReference type="InterPro" id="IPR019798">
    <property type="entry name" value="Ser_HO-MeTrfase_PLP_BS"/>
</dbReference>
<dbReference type="InterPro" id="IPR039429">
    <property type="entry name" value="SHMT-like_dom"/>
</dbReference>
<dbReference type="NCBIfam" id="NF000586">
    <property type="entry name" value="PRK00011.1"/>
    <property type="match status" value="1"/>
</dbReference>
<dbReference type="PANTHER" id="PTHR11680">
    <property type="entry name" value="SERINE HYDROXYMETHYLTRANSFERASE"/>
    <property type="match status" value="1"/>
</dbReference>
<dbReference type="PANTHER" id="PTHR11680:SF35">
    <property type="entry name" value="SERINE HYDROXYMETHYLTRANSFERASE 1"/>
    <property type="match status" value="1"/>
</dbReference>
<dbReference type="Pfam" id="PF00464">
    <property type="entry name" value="SHMT"/>
    <property type="match status" value="1"/>
</dbReference>
<dbReference type="PIRSF" id="PIRSF000412">
    <property type="entry name" value="SHMT"/>
    <property type="match status" value="1"/>
</dbReference>
<dbReference type="SUPFAM" id="SSF53383">
    <property type="entry name" value="PLP-dependent transferases"/>
    <property type="match status" value="1"/>
</dbReference>
<dbReference type="PROSITE" id="PS00096">
    <property type="entry name" value="SHMT"/>
    <property type="match status" value="1"/>
</dbReference>